<gene>
    <name evidence="1" type="primary">atpC</name>
    <name type="ordered locus">Emin_1523</name>
</gene>
<reference key="1">
    <citation type="journal article" date="2009" name="Appl. Environ. Microbiol.">
        <title>Genomic analysis of 'Elusimicrobium minutum,' the first cultivated representative of the phylum 'Elusimicrobia' (formerly termite group 1).</title>
        <authorList>
            <person name="Herlemann D.P.R."/>
            <person name="Geissinger O."/>
            <person name="Ikeda-Ohtsubo W."/>
            <person name="Kunin V."/>
            <person name="Sun H."/>
            <person name="Lapidus A."/>
            <person name="Hugenholtz P."/>
            <person name="Brune A."/>
        </authorList>
    </citation>
    <scope>NUCLEOTIDE SEQUENCE [LARGE SCALE GENOMIC DNA]</scope>
    <source>
        <strain>Pei191</strain>
    </source>
</reference>
<feature type="chain" id="PRO_1000146330" description="ATP synthase epsilon chain">
    <location>
        <begin position="1"/>
        <end position="135"/>
    </location>
</feature>
<feature type="region of interest" description="Disordered" evidence="2">
    <location>
        <begin position="84"/>
        <end position="107"/>
    </location>
</feature>
<feature type="compositionally biased region" description="Basic and acidic residues" evidence="2">
    <location>
        <begin position="86"/>
        <end position="102"/>
    </location>
</feature>
<accession>B2KEX4</accession>
<organism>
    <name type="scientific">Elusimicrobium minutum (strain Pei191)</name>
    <dbReference type="NCBI Taxonomy" id="445932"/>
    <lineage>
        <taxon>Bacteria</taxon>
        <taxon>Pseudomonadati</taxon>
        <taxon>Elusimicrobiota</taxon>
        <taxon>Elusimicrobia</taxon>
        <taxon>Elusimicrobiales</taxon>
        <taxon>Elusimicrobiaceae</taxon>
        <taxon>Elusimicrobium</taxon>
    </lineage>
</organism>
<comment type="function">
    <text evidence="1">Produces ATP from ADP in the presence of a proton gradient across the membrane.</text>
</comment>
<comment type="subunit">
    <text evidence="1">F-type ATPases have 2 components, CF(1) - the catalytic core - and CF(0) - the membrane proton channel. CF(1) has five subunits: alpha(3), beta(3), gamma(1), delta(1), epsilon(1). CF(0) has three main subunits: a, b and c.</text>
</comment>
<comment type="subcellular location">
    <subcellularLocation>
        <location evidence="1">Cell membrane</location>
        <topology evidence="1">Peripheral membrane protein</topology>
    </subcellularLocation>
</comment>
<comment type="similarity">
    <text evidence="1">Belongs to the ATPase epsilon chain family.</text>
</comment>
<dbReference type="EMBL" id="CP001055">
    <property type="protein sequence ID" value="ACC99070.1"/>
    <property type="molecule type" value="Genomic_DNA"/>
</dbReference>
<dbReference type="RefSeq" id="WP_012415684.1">
    <property type="nucleotide sequence ID" value="NC_010644.1"/>
</dbReference>
<dbReference type="SMR" id="B2KEX4"/>
<dbReference type="STRING" id="445932.Emin_1523"/>
<dbReference type="KEGG" id="emi:Emin_1523"/>
<dbReference type="HOGENOM" id="CLU_084338_2_1_0"/>
<dbReference type="OrthoDB" id="9799969at2"/>
<dbReference type="Proteomes" id="UP000001029">
    <property type="component" value="Chromosome"/>
</dbReference>
<dbReference type="GO" id="GO:0005886">
    <property type="term" value="C:plasma membrane"/>
    <property type="evidence" value="ECO:0007669"/>
    <property type="project" value="UniProtKB-SubCell"/>
</dbReference>
<dbReference type="GO" id="GO:0045259">
    <property type="term" value="C:proton-transporting ATP synthase complex"/>
    <property type="evidence" value="ECO:0007669"/>
    <property type="project" value="UniProtKB-KW"/>
</dbReference>
<dbReference type="GO" id="GO:0005524">
    <property type="term" value="F:ATP binding"/>
    <property type="evidence" value="ECO:0007669"/>
    <property type="project" value="UniProtKB-UniRule"/>
</dbReference>
<dbReference type="GO" id="GO:0046933">
    <property type="term" value="F:proton-transporting ATP synthase activity, rotational mechanism"/>
    <property type="evidence" value="ECO:0007669"/>
    <property type="project" value="UniProtKB-UniRule"/>
</dbReference>
<dbReference type="CDD" id="cd12152">
    <property type="entry name" value="F1-ATPase_delta"/>
    <property type="match status" value="1"/>
</dbReference>
<dbReference type="Gene3D" id="2.60.15.10">
    <property type="entry name" value="F0F1 ATP synthase delta/epsilon subunit, N-terminal"/>
    <property type="match status" value="1"/>
</dbReference>
<dbReference type="HAMAP" id="MF_00530">
    <property type="entry name" value="ATP_synth_epsil_bac"/>
    <property type="match status" value="1"/>
</dbReference>
<dbReference type="InterPro" id="IPR001469">
    <property type="entry name" value="ATP_synth_F1_dsu/esu"/>
</dbReference>
<dbReference type="InterPro" id="IPR020546">
    <property type="entry name" value="ATP_synth_F1_dsu/esu_N"/>
</dbReference>
<dbReference type="InterPro" id="IPR036771">
    <property type="entry name" value="ATPsynth_dsu/esu_N"/>
</dbReference>
<dbReference type="NCBIfam" id="TIGR01216">
    <property type="entry name" value="ATP_synt_epsi"/>
    <property type="match status" value="1"/>
</dbReference>
<dbReference type="PANTHER" id="PTHR13822">
    <property type="entry name" value="ATP SYNTHASE DELTA/EPSILON CHAIN"/>
    <property type="match status" value="1"/>
</dbReference>
<dbReference type="PANTHER" id="PTHR13822:SF10">
    <property type="entry name" value="ATP SYNTHASE EPSILON CHAIN, CHLOROPLASTIC"/>
    <property type="match status" value="1"/>
</dbReference>
<dbReference type="Pfam" id="PF02823">
    <property type="entry name" value="ATP-synt_DE_N"/>
    <property type="match status" value="1"/>
</dbReference>
<dbReference type="SUPFAM" id="SSF51344">
    <property type="entry name" value="Epsilon subunit of F1F0-ATP synthase N-terminal domain"/>
    <property type="match status" value="1"/>
</dbReference>
<name>ATPE_ELUMP</name>
<keyword id="KW-0066">ATP synthesis</keyword>
<keyword id="KW-1003">Cell membrane</keyword>
<keyword id="KW-0139">CF(1)</keyword>
<keyword id="KW-0375">Hydrogen ion transport</keyword>
<keyword id="KW-0406">Ion transport</keyword>
<keyword id="KW-0472">Membrane</keyword>
<keyword id="KW-1185">Reference proteome</keyword>
<keyword id="KW-0813">Transport</keyword>
<protein>
    <recommendedName>
        <fullName evidence="1">ATP synthase epsilon chain</fullName>
    </recommendedName>
    <alternativeName>
        <fullName evidence="1">ATP synthase F1 sector epsilon subunit</fullName>
    </alternativeName>
    <alternativeName>
        <fullName evidence="1">F-ATPase epsilon subunit</fullName>
    </alternativeName>
</protein>
<evidence type="ECO:0000255" key="1">
    <source>
        <dbReference type="HAMAP-Rule" id="MF_00530"/>
    </source>
</evidence>
<evidence type="ECO:0000256" key="2">
    <source>
        <dbReference type="SAM" id="MobiDB-lite"/>
    </source>
</evidence>
<sequence>MKKLTFSFISPERPIVQNQEADFVALPAFEGEMGVLPGHVNSVVILMPGFVRFKNNGEEKEFAIIDGFAEVFKDHIDVFASEASLSEEKQSEEQKQRLERAKKALSSQDADIDIELAEIQLKTQILKMKMKKRKM</sequence>
<proteinExistence type="inferred from homology"/>